<evidence type="ECO:0000255" key="1">
    <source>
        <dbReference type="HAMAP-Rule" id="MF_01216"/>
    </source>
</evidence>
<name>AZOR_PSEA6</name>
<proteinExistence type="inferred from homology"/>
<keyword id="KW-0285">Flavoprotein</keyword>
<keyword id="KW-0288">FMN</keyword>
<keyword id="KW-0520">NAD</keyword>
<keyword id="KW-0560">Oxidoreductase</keyword>
<sequence>MKNVLVLNASLQGENGNSSQLTSEFVTQLQQTESIKVEKVDLNTLNLPHLSAQEMQTWSMLSDNMTNDQAALAAYSNELLAQLERSDVIVVGMPMYNFTIPSTFKAWIDRVARAGRTFSYTSEGPKGHLQGKTVYIFAARGGIYQGTDNDTQTPYLKLVFGLMGITDVNFIYLEGLNMGEEYAQTSWQQARESLTTLLPATV</sequence>
<comment type="function">
    <text evidence="1">Quinone reductase that provides resistance to thiol-specific stress caused by electrophilic quinones.</text>
</comment>
<comment type="function">
    <text evidence="1">Also exhibits azoreductase activity. Catalyzes the reductive cleavage of the azo bond in aromatic azo compounds to the corresponding amines.</text>
</comment>
<comment type="catalytic activity">
    <reaction evidence="1">
        <text>2 a quinone + NADH + H(+) = 2 a 1,4-benzosemiquinone + NAD(+)</text>
        <dbReference type="Rhea" id="RHEA:65952"/>
        <dbReference type="ChEBI" id="CHEBI:15378"/>
        <dbReference type="ChEBI" id="CHEBI:57540"/>
        <dbReference type="ChEBI" id="CHEBI:57945"/>
        <dbReference type="ChEBI" id="CHEBI:132124"/>
        <dbReference type="ChEBI" id="CHEBI:134225"/>
    </reaction>
</comment>
<comment type="catalytic activity">
    <reaction evidence="1">
        <text>N,N-dimethyl-1,4-phenylenediamine + anthranilate + 2 NAD(+) = 2-(4-dimethylaminophenyl)diazenylbenzoate + 2 NADH + 2 H(+)</text>
        <dbReference type="Rhea" id="RHEA:55872"/>
        <dbReference type="ChEBI" id="CHEBI:15378"/>
        <dbReference type="ChEBI" id="CHEBI:15783"/>
        <dbReference type="ChEBI" id="CHEBI:16567"/>
        <dbReference type="ChEBI" id="CHEBI:57540"/>
        <dbReference type="ChEBI" id="CHEBI:57945"/>
        <dbReference type="ChEBI" id="CHEBI:71579"/>
        <dbReference type="EC" id="1.7.1.17"/>
    </reaction>
</comment>
<comment type="cofactor">
    <cofactor evidence="1">
        <name>FMN</name>
        <dbReference type="ChEBI" id="CHEBI:58210"/>
    </cofactor>
    <text evidence="1">Binds 1 FMN per subunit.</text>
</comment>
<comment type="subunit">
    <text evidence="1">Homodimer.</text>
</comment>
<comment type="similarity">
    <text evidence="1">Belongs to the azoreductase type 1 family.</text>
</comment>
<gene>
    <name evidence="1" type="primary">azoR</name>
    <name type="ordered locus">Patl_2527</name>
</gene>
<feature type="chain" id="PRO_1000138986" description="FMN-dependent NADH:quinone oxidoreductase">
    <location>
        <begin position="1"/>
        <end position="202"/>
    </location>
</feature>
<feature type="binding site" evidence="1">
    <location>
        <position position="10"/>
    </location>
    <ligand>
        <name>FMN</name>
        <dbReference type="ChEBI" id="CHEBI:58210"/>
    </ligand>
</feature>
<feature type="binding site" evidence="1">
    <location>
        <begin position="95"/>
        <end position="98"/>
    </location>
    <ligand>
        <name>FMN</name>
        <dbReference type="ChEBI" id="CHEBI:58210"/>
    </ligand>
</feature>
<dbReference type="EC" id="1.6.5.-" evidence="1"/>
<dbReference type="EC" id="1.7.1.17" evidence="1"/>
<dbReference type="EMBL" id="CP000388">
    <property type="protein sequence ID" value="ABG41043.1"/>
    <property type="molecule type" value="Genomic_DNA"/>
</dbReference>
<dbReference type="RefSeq" id="WP_011575309.1">
    <property type="nucleotide sequence ID" value="NC_008228.1"/>
</dbReference>
<dbReference type="SMR" id="Q15SU5"/>
<dbReference type="STRING" id="342610.Patl_2527"/>
<dbReference type="KEGG" id="pat:Patl_2527"/>
<dbReference type="eggNOG" id="COG1182">
    <property type="taxonomic scope" value="Bacteria"/>
</dbReference>
<dbReference type="HOGENOM" id="CLU_088964_0_0_6"/>
<dbReference type="OrthoDB" id="9787136at2"/>
<dbReference type="Proteomes" id="UP000001981">
    <property type="component" value="Chromosome"/>
</dbReference>
<dbReference type="GO" id="GO:0009055">
    <property type="term" value="F:electron transfer activity"/>
    <property type="evidence" value="ECO:0007669"/>
    <property type="project" value="UniProtKB-UniRule"/>
</dbReference>
<dbReference type="GO" id="GO:0010181">
    <property type="term" value="F:FMN binding"/>
    <property type="evidence" value="ECO:0007669"/>
    <property type="project" value="UniProtKB-UniRule"/>
</dbReference>
<dbReference type="GO" id="GO:0016652">
    <property type="term" value="F:oxidoreductase activity, acting on NAD(P)H as acceptor"/>
    <property type="evidence" value="ECO:0007669"/>
    <property type="project" value="UniProtKB-UniRule"/>
</dbReference>
<dbReference type="GO" id="GO:0016655">
    <property type="term" value="F:oxidoreductase activity, acting on NAD(P)H, quinone or similar compound as acceptor"/>
    <property type="evidence" value="ECO:0007669"/>
    <property type="project" value="InterPro"/>
</dbReference>
<dbReference type="Gene3D" id="3.40.50.360">
    <property type="match status" value="1"/>
</dbReference>
<dbReference type="HAMAP" id="MF_01216">
    <property type="entry name" value="Azoreductase_type1"/>
    <property type="match status" value="1"/>
</dbReference>
<dbReference type="InterPro" id="IPR003680">
    <property type="entry name" value="Flavodoxin_fold"/>
</dbReference>
<dbReference type="InterPro" id="IPR029039">
    <property type="entry name" value="Flavoprotein-like_sf"/>
</dbReference>
<dbReference type="InterPro" id="IPR050104">
    <property type="entry name" value="FMN-dep_NADH:Q_OxRdtase_AzoR1"/>
</dbReference>
<dbReference type="InterPro" id="IPR023048">
    <property type="entry name" value="NADH:quinone_OxRdtase_FMN_depd"/>
</dbReference>
<dbReference type="PANTHER" id="PTHR43741">
    <property type="entry name" value="FMN-DEPENDENT NADH-AZOREDUCTASE 1"/>
    <property type="match status" value="1"/>
</dbReference>
<dbReference type="PANTHER" id="PTHR43741:SF4">
    <property type="entry name" value="FMN-DEPENDENT NADH:QUINONE OXIDOREDUCTASE"/>
    <property type="match status" value="1"/>
</dbReference>
<dbReference type="Pfam" id="PF02525">
    <property type="entry name" value="Flavodoxin_2"/>
    <property type="match status" value="1"/>
</dbReference>
<dbReference type="SUPFAM" id="SSF52218">
    <property type="entry name" value="Flavoproteins"/>
    <property type="match status" value="1"/>
</dbReference>
<reference key="1">
    <citation type="submission" date="2006-06" db="EMBL/GenBank/DDBJ databases">
        <title>Complete sequence of Pseudoalteromonas atlantica T6c.</title>
        <authorList>
            <consortium name="US DOE Joint Genome Institute"/>
            <person name="Copeland A."/>
            <person name="Lucas S."/>
            <person name="Lapidus A."/>
            <person name="Barry K."/>
            <person name="Detter J.C."/>
            <person name="Glavina del Rio T."/>
            <person name="Hammon N."/>
            <person name="Israni S."/>
            <person name="Dalin E."/>
            <person name="Tice H."/>
            <person name="Pitluck S."/>
            <person name="Saunders E."/>
            <person name="Brettin T."/>
            <person name="Bruce D."/>
            <person name="Han C."/>
            <person name="Tapia R."/>
            <person name="Gilna P."/>
            <person name="Schmutz J."/>
            <person name="Larimer F."/>
            <person name="Land M."/>
            <person name="Hauser L."/>
            <person name="Kyrpides N."/>
            <person name="Kim E."/>
            <person name="Karls A.C."/>
            <person name="Bartlett D."/>
            <person name="Higgins B.P."/>
            <person name="Richardson P."/>
        </authorList>
    </citation>
    <scope>NUCLEOTIDE SEQUENCE [LARGE SCALE GENOMIC DNA]</scope>
    <source>
        <strain>T6c / ATCC BAA-1087</strain>
    </source>
</reference>
<protein>
    <recommendedName>
        <fullName evidence="1">FMN-dependent NADH:quinone oxidoreductase</fullName>
        <ecNumber evidence="1">1.6.5.-</ecNumber>
    </recommendedName>
    <alternativeName>
        <fullName evidence="1">Azo-dye reductase</fullName>
    </alternativeName>
    <alternativeName>
        <fullName evidence="1">FMN-dependent NADH-azo compound oxidoreductase</fullName>
    </alternativeName>
    <alternativeName>
        <fullName evidence="1">FMN-dependent NADH-azoreductase</fullName>
        <ecNumber evidence="1">1.7.1.17</ecNumber>
    </alternativeName>
</protein>
<accession>Q15SU5</accession>
<organism>
    <name type="scientific">Pseudoalteromonas atlantica (strain T6c / ATCC BAA-1087)</name>
    <dbReference type="NCBI Taxonomy" id="3042615"/>
    <lineage>
        <taxon>Bacteria</taxon>
        <taxon>Pseudomonadati</taxon>
        <taxon>Pseudomonadota</taxon>
        <taxon>Gammaproteobacteria</taxon>
        <taxon>Alteromonadales</taxon>
        <taxon>Alteromonadaceae</taxon>
        <taxon>Paraglaciecola</taxon>
    </lineage>
</organism>